<comment type="function">
    <text evidence="2 3">A cytochrome P450 monooxygenase that catalyzes omega and omega-1 hydroxylation of saturated fatty acids. Exhibits preferential omega versus omega-1 regioselectivity and (R) versus (S) stereoselectivity for hydroxylation of lauric and myristic acids (PubMed:10620324, PubMed:10869363). Has low activity toward palmitic acid (PubMed:10620324). Mechanistically, uses molecular oxygen inserting one oxygen atom into a substrate, and reducing the second into a water molecule, with two electrons provided by NADPH via cytochrome P450 reductase (CPR; NADPH-ferrihemoprotein reductase) (PubMed:10620324, PubMed:10869363).</text>
</comment>
<comment type="catalytic activity">
    <reaction evidence="5">
        <text>an omega-methyl-long-chain fatty acid + reduced [NADPH--hemoprotein reductase] + O2 = an omega-hydroxy-long-chain fatty acid + oxidized [NADPH--hemoprotein reductase] + H2O + H(+)</text>
        <dbReference type="Rhea" id="RHEA:56748"/>
        <dbReference type="Rhea" id="RHEA-COMP:11964"/>
        <dbReference type="Rhea" id="RHEA-COMP:11965"/>
        <dbReference type="ChEBI" id="CHEBI:15377"/>
        <dbReference type="ChEBI" id="CHEBI:15378"/>
        <dbReference type="ChEBI" id="CHEBI:15379"/>
        <dbReference type="ChEBI" id="CHEBI:57618"/>
        <dbReference type="ChEBI" id="CHEBI:58210"/>
        <dbReference type="ChEBI" id="CHEBI:140991"/>
        <dbReference type="ChEBI" id="CHEBI:140992"/>
        <dbReference type="EC" id="1.14.14.80"/>
    </reaction>
</comment>
<comment type="catalytic activity">
    <reaction evidence="3">
        <text>dodecanoate + reduced [NADPH--hemoprotein reductase] + O2 = (11R)-hydroxydodecanoate + oxidized [NADPH--hemoprotein reductase] + H2O + H(+)</text>
        <dbReference type="Rhea" id="RHEA:41724"/>
        <dbReference type="Rhea" id="RHEA-COMP:11964"/>
        <dbReference type="Rhea" id="RHEA-COMP:11965"/>
        <dbReference type="ChEBI" id="CHEBI:15377"/>
        <dbReference type="ChEBI" id="CHEBI:15378"/>
        <dbReference type="ChEBI" id="CHEBI:15379"/>
        <dbReference type="ChEBI" id="CHEBI:18262"/>
        <dbReference type="ChEBI" id="CHEBI:57618"/>
        <dbReference type="ChEBI" id="CHEBI:58210"/>
        <dbReference type="ChEBI" id="CHEBI:78423"/>
    </reaction>
    <physiologicalReaction direction="left-to-right" evidence="10">
        <dbReference type="Rhea" id="RHEA:41725"/>
    </physiologicalReaction>
</comment>
<comment type="catalytic activity">
    <reaction evidence="2 3">
        <text>dodecanoate + reduced [NADPH--hemoprotein reductase] + O2 = 12-hydroxydodecanoate + oxidized [NADPH--hemoprotein reductase] + H2O + H(+)</text>
        <dbReference type="Rhea" id="RHEA:38947"/>
        <dbReference type="Rhea" id="RHEA-COMP:11964"/>
        <dbReference type="Rhea" id="RHEA-COMP:11965"/>
        <dbReference type="ChEBI" id="CHEBI:15377"/>
        <dbReference type="ChEBI" id="CHEBI:15378"/>
        <dbReference type="ChEBI" id="CHEBI:15379"/>
        <dbReference type="ChEBI" id="CHEBI:18262"/>
        <dbReference type="ChEBI" id="CHEBI:36204"/>
        <dbReference type="ChEBI" id="CHEBI:57618"/>
        <dbReference type="ChEBI" id="CHEBI:58210"/>
    </reaction>
    <physiologicalReaction direction="left-to-right" evidence="9 10">
        <dbReference type="Rhea" id="RHEA:38948"/>
    </physiologicalReaction>
</comment>
<comment type="catalytic activity">
    <reaction evidence="2 3">
        <text>tetradecanoate + reduced [NADPH--hemoprotein reductase] + O2 = 14-hydroxytetradecanoate + oxidized [NADPH--hemoprotein reductase] + H2O + H(+)</text>
        <dbReference type="Rhea" id="RHEA:40203"/>
        <dbReference type="Rhea" id="RHEA-COMP:11964"/>
        <dbReference type="Rhea" id="RHEA-COMP:11965"/>
        <dbReference type="ChEBI" id="CHEBI:15377"/>
        <dbReference type="ChEBI" id="CHEBI:15378"/>
        <dbReference type="ChEBI" id="CHEBI:15379"/>
        <dbReference type="ChEBI" id="CHEBI:30807"/>
        <dbReference type="ChEBI" id="CHEBI:57618"/>
        <dbReference type="ChEBI" id="CHEBI:58210"/>
        <dbReference type="ChEBI" id="CHEBI:77033"/>
    </reaction>
    <physiologicalReaction direction="left-to-right" evidence="9 10">
        <dbReference type="Rhea" id="RHEA:40204"/>
    </physiologicalReaction>
</comment>
<comment type="catalytic activity">
    <reaction evidence="2">
        <text>hexadecanoate + reduced [NADPH--hemoprotein reductase] + O2 = 16-hydroxyhexadecanoate + oxidized [NADPH--hemoprotein reductase] + H2O + H(+)</text>
        <dbReference type="Rhea" id="RHEA:40199"/>
        <dbReference type="Rhea" id="RHEA-COMP:11964"/>
        <dbReference type="Rhea" id="RHEA-COMP:11965"/>
        <dbReference type="ChEBI" id="CHEBI:7896"/>
        <dbReference type="ChEBI" id="CHEBI:15377"/>
        <dbReference type="ChEBI" id="CHEBI:15378"/>
        <dbReference type="ChEBI" id="CHEBI:15379"/>
        <dbReference type="ChEBI" id="CHEBI:55329"/>
        <dbReference type="ChEBI" id="CHEBI:57618"/>
        <dbReference type="ChEBI" id="CHEBI:58210"/>
        <dbReference type="EC" id="1.14.14.80"/>
    </reaction>
    <physiologicalReaction direction="left-to-right" evidence="9">
        <dbReference type="Rhea" id="RHEA:40200"/>
    </physiologicalReaction>
</comment>
<comment type="cofactor">
    <cofactor evidence="1">
        <name>heme</name>
        <dbReference type="ChEBI" id="CHEBI:30413"/>
    </cofactor>
</comment>
<comment type="pathway">
    <text evidence="9 10">Lipid metabolism; fatty acid metabolism.</text>
</comment>
<comment type="subcellular location">
    <subcellularLocation>
        <location>Endoplasmic reticulum membrane</location>
        <topology>Peripheral membrane protein</topology>
    </subcellularLocation>
    <subcellularLocation>
        <location>Microsome membrane</location>
        <topology>Peripheral membrane protein</topology>
    </subcellularLocation>
</comment>
<comment type="induction">
    <text>By clofibrate.</text>
</comment>
<comment type="similarity">
    <text evidence="8">Belongs to the cytochrome P450 family.</text>
</comment>
<organism>
    <name type="scientific">Rattus norvegicus</name>
    <name type="common">Rat</name>
    <dbReference type="NCBI Taxonomy" id="10116"/>
    <lineage>
        <taxon>Eukaryota</taxon>
        <taxon>Metazoa</taxon>
        <taxon>Chordata</taxon>
        <taxon>Craniata</taxon>
        <taxon>Vertebrata</taxon>
        <taxon>Euteleostomi</taxon>
        <taxon>Mammalia</taxon>
        <taxon>Eutheria</taxon>
        <taxon>Euarchontoglires</taxon>
        <taxon>Glires</taxon>
        <taxon>Rodentia</taxon>
        <taxon>Myomorpha</taxon>
        <taxon>Muroidea</taxon>
        <taxon>Muridae</taxon>
        <taxon>Murinae</taxon>
        <taxon>Rattus</taxon>
    </lineage>
</organism>
<accession>P20816</accession>
<accession>Q4G071</accession>
<gene>
    <name evidence="7 11" type="primary">Cyp4a2</name>
    <name type="synonym">Cyp4a-2</name>
    <name type="synonym">Cyp4a11</name>
</gene>
<name>CP4A2_RAT</name>
<reference key="1">
    <citation type="journal article" date="1989" name="DNA">
        <title>The rat clofibrate-inducible CYP4A gene subfamily. I. Complete intron and exon sequence of the CYP4A1 and CYP4A2 genes, unique exon organization, and identification of a conserved 19-bp upstream element.</title>
        <authorList>
            <person name="Kimura S."/>
            <person name="Hanioka N."/>
            <person name="Matsunaga E."/>
            <person name="Gonzalez F.J."/>
        </authorList>
    </citation>
    <scope>NUCLEOTIDE SEQUENCE [GENOMIC DNA]</scope>
    <source>
        <tissue>Liver</tissue>
    </source>
</reference>
<reference key="2">
    <citation type="journal article" date="2004" name="Genome Res.">
        <title>The status, quality, and expansion of the NIH full-length cDNA project: the Mammalian Gene Collection (MGC).</title>
        <authorList>
            <consortium name="The MGC Project Team"/>
        </authorList>
    </citation>
    <scope>NUCLEOTIDE SEQUENCE [LARGE SCALE MRNA]</scope>
    <source>
        <tissue>Kidney</tissue>
    </source>
</reference>
<reference key="3">
    <citation type="journal article" date="1992" name="Biochim. Biophys. Acta">
        <title>Purification and NH2-terminal amino acid sequences of human and rat kidney fatty acid omega-hydroxylases.</title>
        <authorList>
            <person name="Kawashima H."/>
            <person name="Kusunose E."/>
            <person name="Kubota I."/>
            <person name="Maekawa M."/>
            <person name="Kusunose M."/>
        </authorList>
    </citation>
    <scope>PROTEIN SEQUENCE OF 5-34</scope>
    <source>
        <tissue>Kidney</tissue>
    </source>
</reference>
<reference key="4">
    <citation type="journal article" date="1990" name="Arch. Biochem. Biophys.">
        <title>Characterization of three cytochrome P450s purified from renal microsomes of untreated male rats and comparison with human renal cytochrome P450.</title>
        <authorList>
            <person name="Imaoka S."/>
            <person name="Nagashima K."/>
            <person name="Funae Y."/>
        </authorList>
    </citation>
    <scope>PROTEIN SEQUENCE OF 5-19</scope>
    <source>
        <strain>Sprague-Dawley</strain>
        <tissue>Kidney</tissue>
    </source>
</reference>
<reference key="5">
    <citation type="journal article" date="2000" name="Arch. Biochem. Biophys.">
        <title>Structural determination of the substrate specificities and regioselectivities of the rat and human fatty acid omega-hydroxylases.</title>
        <authorList>
            <person name="Hoch U."/>
            <person name="Zhang Z."/>
            <person name="Kroetz D.L."/>
            <person name="Ortiz de Montellano P.R."/>
        </authorList>
    </citation>
    <scope>FUNCTION</scope>
    <scope>CATALYTIC ACTIVITY</scope>
    <scope>PATHWAY</scope>
</reference>
<reference key="6">
    <citation type="journal article" date="2000" name="J. Biol. Chem.">
        <title>Molecular basis for the omega-regiospecificity of the CYP4A2 and CYP4A3 fatty acid hydroxylases.</title>
        <authorList>
            <person name="Hoch U."/>
            <person name="Falck J.R."/>
            <person name="de Montellano P.R."/>
        </authorList>
    </citation>
    <scope>FUNCTION</scope>
    <scope>CATALYTIC ACTIVITY</scope>
    <scope>MUTAGENESIS OF SER-116</scope>
    <scope>PATHWAY</scope>
</reference>
<reference key="7">
    <citation type="journal article" date="2001" name="J. Biol. Chem.">
        <title>Covalently linked heme in cytochrome P4504A fatty acid hydroxylases.</title>
        <authorList>
            <person name="Hoch U."/>
            <person name="Ortiz de Montellano P.R."/>
        </authorList>
    </citation>
    <scope>COVALENT HEME ATTACHMENT</scope>
</reference>
<reference key="8">
    <citation type="journal article" date="2012" name="Nat. Commun.">
        <title>Quantitative maps of protein phosphorylation sites across 14 different rat organs and tissues.</title>
        <authorList>
            <person name="Lundby A."/>
            <person name="Secher A."/>
            <person name="Lage K."/>
            <person name="Nordsborg N.B."/>
            <person name="Dmytriyev A."/>
            <person name="Lundby C."/>
            <person name="Olsen J.V."/>
        </authorList>
    </citation>
    <scope>PHOSPHORYLATION [LARGE SCALE ANALYSIS] AT SER-434</scope>
    <scope>IDENTIFICATION BY MASS SPECTROMETRY [LARGE SCALE ANALYSIS]</scope>
</reference>
<protein>
    <recommendedName>
        <fullName>Cytochrome P450 4A2</fullName>
    </recommendedName>
    <alternativeName>
        <fullName>CYPIVA2</fullName>
    </alternativeName>
    <alternativeName>
        <fullName>Cytochrome P-450 K-2</fullName>
    </alternativeName>
    <alternativeName>
        <fullName>Cytochrome P450 K-5</fullName>
    </alternativeName>
    <alternativeName>
        <fullName>Cytochrome P450-LA-omega 2</fullName>
    </alternativeName>
    <alternativeName>
        <fullName>Lauric acid omega-hydroxylase</fullName>
    </alternativeName>
    <alternativeName>
        <fullName>Long-chain fatty acid omega-monooxygenase</fullName>
        <ecNumber evidence="5">1.14.14.80</ecNumber>
    </alternativeName>
</protein>
<keyword id="KW-0903">Direct protein sequencing</keyword>
<keyword id="KW-0256">Endoplasmic reticulum</keyword>
<keyword id="KW-0349">Heme</keyword>
<keyword id="KW-0408">Iron</keyword>
<keyword id="KW-0472">Membrane</keyword>
<keyword id="KW-0479">Metal-binding</keyword>
<keyword id="KW-0492">Microsome</keyword>
<keyword id="KW-0503">Monooxygenase</keyword>
<keyword id="KW-0521">NADP</keyword>
<keyword id="KW-0560">Oxidoreductase</keyword>
<keyword id="KW-0597">Phosphoprotein</keyword>
<keyword id="KW-1185">Reference proteome</keyword>
<dbReference type="EC" id="1.14.14.80" evidence="5"/>
<dbReference type="EMBL" id="M57719">
    <property type="protein sequence ID" value="AAA41039.1"/>
    <property type="molecule type" value="Genomic_DNA"/>
</dbReference>
<dbReference type="EMBL" id="BC078684">
    <property type="protein sequence ID" value="AAH78684.1"/>
    <property type="molecule type" value="mRNA"/>
</dbReference>
<dbReference type="EMBL" id="BC098705">
    <property type="protein sequence ID" value="AAH98705.1"/>
    <property type="molecule type" value="mRNA"/>
</dbReference>
<dbReference type="PIR" id="A32965">
    <property type="entry name" value="A32965"/>
</dbReference>
<dbReference type="PIR" id="PC4350">
    <property type="entry name" value="PC4350"/>
</dbReference>
<dbReference type="RefSeq" id="NP_001038235.1">
    <property type="nucleotide sequence ID" value="NM_001044770.2"/>
</dbReference>
<dbReference type="RefSeq" id="XP_017448632.1">
    <property type="nucleotide sequence ID" value="XM_017593143.1"/>
</dbReference>
<dbReference type="SMR" id="P20816"/>
<dbReference type="FunCoup" id="P20816">
    <property type="interactions" value="119"/>
</dbReference>
<dbReference type="STRING" id="10116.ENSRNOP00000074484"/>
<dbReference type="SwissLipids" id="SLP:000000743"/>
<dbReference type="GlyGen" id="P20816">
    <property type="glycosylation" value="1 site"/>
</dbReference>
<dbReference type="iPTMnet" id="P20816"/>
<dbReference type="PaxDb" id="10116-ENSRNOP00000042072"/>
<dbReference type="Ensembl" id="ENSRNOT00000111375.1">
    <property type="protein sequence ID" value="ENSRNOP00000082696.1"/>
    <property type="gene ID" value="ENSRNOG00000066487.1"/>
</dbReference>
<dbReference type="Ensembl" id="ENSRNOT00000115710.1">
    <property type="protein sequence ID" value="ENSRNOP00000088666.1"/>
    <property type="gene ID" value="ENSRNOG00000064139.1"/>
</dbReference>
<dbReference type="GeneID" id="24306"/>
<dbReference type="KEGG" id="rno:24306"/>
<dbReference type="AGR" id="RGD:2479"/>
<dbReference type="AGR" id="RGD:41366809"/>
<dbReference type="CTD" id="24306"/>
<dbReference type="RGD" id="2479">
    <property type="gene designation" value="Cyp4a2"/>
</dbReference>
<dbReference type="eggNOG" id="KOG0157">
    <property type="taxonomic scope" value="Eukaryota"/>
</dbReference>
<dbReference type="GeneTree" id="ENSGT00940000155173"/>
<dbReference type="HOGENOM" id="CLU_001570_5_1_1"/>
<dbReference type="InParanoid" id="P20816"/>
<dbReference type="OMA" id="SIDHEWH"/>
<dbReference type="BRENDA" id="1.14.14.80">
    <property type="organism ID" value="5301"/>
</dbReference>
<dbReference type="Reactome" id="R-RNO-211935">
    <property type="pathway name" value="Fatty acids"/>
</dbReference>
<dbReference type="Reactome" id="R-RNO-211958">
    <property type="pathway name" value="Miscellaneous substrates"/>
</dbReference>
<dbReference type="Reactome" id="R-RNO-211979">
    <property type="pathway name" value="Eicosanoids"/>
</dbReference>
<dbReference type="Reactome" id="R-RNO-2142691">
    <property type="pathway name" value="Synthesis of Leukotrienes (LT) and Eoxins (EX)"/>
</dbReference>
<dbReference type="UniPathway" id="UPA00199"/>
<dbReference type="PRO" id="PR:P20816"/>
<dbReference type="Proteomes" id="UP000002494">
    <property type="component" value="Chromosome 5"/>
</dbReference>
<dbReference type="Bgee" id="ENSRNOG00000030154">
    <property type="expression patterns" value="Expressed in adult mammalian kidney and 14 other cell types or tissues"/>
</dbReference>
<dbReference type="GO" id="GO:0005789">
    <property type="term" value="C:endoplasmic reticulum membrane"/>
    <property type="evidence" value="ECO:0007669"/>
    <property type="project" value="UniProtKB-SubCell"/>
</dbReference>
<dbReference type="GO" id="GO:0043231">
    <property type="term" value="C:intracellular membrane-bounded organelle"/>
    <property type="evidence" value="ECO:0000318"/>
    <property type="project" value="GO_Central"/>
</dbReference>
<dbReference type="GO" id="GO:0018685">
    <property type="term" value="F:alkane 1-monooxygenase activity"/>
    <property type="evidence" value="ECO:0000315"/>
    <property type="project" value="RGD"/>
</dbReference>
<dbReference type="GO" id="GO:0008405">
    <property type="term" value="F:arachidonate 11,12-epoxygenase activity"/>
    <property type="evidence" value="ECO:0000304"/>
    <property type="project" value="RGD"/>
</dbReference>
<dbReference type="GO" id="GO:0050544">
    <property type="term" value="F:arachidonate binding"/>
    <property type="evidence" value="ECO:0000314"/>
    <property type="project" value="RGD"/>
</dbReference>
<dbReference type="GO" id="GO:0008391">
    <property type="term" value="F:arachidonate monooxygenase activity"/>
    <property type="evidence" value="ECO:0000315"/>
    <property type="project" value="RGD"/>
</dbReference>
<dbReference type="GO" id="GO:0005504">
    <property type="term" value="F:fatty acid binding"/>
    <property type="evidence" value="ECO:0000314"/>
    <property type="project" value="RGD"/>
</dbReference>
<dbReference type="GO" id="GO:0020037">
    <property type="term" value="F:heme binding"/>
    <property type="evidence" value="ECO:0007669"/>
    <property type="project" value="InterPro"/>
</dbReference>
<dbReference type="GO" id="GO:0005506">
    <property type="term" value="F:iron ion binding"/>
    <property type="evidence" value="ECO:0007669"/>
    <property type="project" value="InterPro"/>
</dbReference>
<dbReference type="GO" id="GO:0102033">
    <property type="term" value="F:long-chain fatty acid omega-hydroxylase activity"/>
    <property type="evidence" value="ECO:0007669"/>
    <property type="project" value="UniProtKB-EC"/>
</dbReference>
<dbReference type="GO" id="GO:0019369">
    <property type="term" value="P:arachidonate metabolic process"/>
    <property type="evidence" value="ECO:0000315"/>
    <property type="project" value="RGD"/>
</dbReference>
<dbReference type="GO" id="GO:0046456">
    <property type="term" value="P:icosanoid biosynthetic process"/>
    <property type="evidence" value="ECO:0000315"/>
    <property type="project" value="RGD"/>
</dbReference>
<dbReference type="GO" id="GO:0001822">
    <property type="term" value="P:kidney development"/>
    <property type="evidence" value="ECO:0000270"/>
    <property type="project" value="RGD"/>
</dbReference>
<dbReference type="GO" id="GO:0048252">
    <property type="term" value="P:lauric acid metabolic process"/>
    <property type="evidence" value="ECO:0000314"/>
    <property type="project" value="RGD"/>
</dbReference>
<dbReference type="GO" id="GO:0043651">
    <property type="term" value="P:linoleic acid metabolic process"/>
    <property type="evidence" value="ECO:0000314"/>
    <property type="project" value="RGD"/>
</dbReference>
<dbReference type="GO" id="GO:0009725">
    <property type="term" value="P:response to hormone"/>
    <property type="evidence" value="ECO:0000270"/>
    <property type="project" value="RGD"/>
</dbReference>
<dbReference type="GO" id="GO:0009410">
    <property type="term" value="P:response to xenobiotic stimulus"/>
    <property type="evidence" value="ECO:0000270"/>
    <property type="project" value="RGD"/>
</dbReference>
<dbReference type="CDD" id="cd20678">
    <property type="entry name" value="CYP4B-like"/>
    <property type="match status" value="1"/>
</dbReference>
<dbReference type="FunFam" id="1.10.630.10:FF:000005">
    <property type="entry name" value="cytochrome P450 4F22 isoform X2"/>
    <property type="match status" value="1"/>
</dbReference>
<dbReference type="Gene3D" id="1.10.630.10">
    <property type="entry name" value="Cytochrome P450"/>
    <property type="match status" value="1"/>
</dbReference>
<dbReference type="InterPro" id="IPR001128">
    <property type="entry name" value="Cyt_P450"/>
</dbReference>
<dbReference type="InterPro" id="IPR017972">
    <property type="entry name" value="Cyt_P450_CS"/>
</dbReference>
<dbReference type="InterPro" id="IPR002401">
    <property type="entry name" value="Cyt_P450_E_grp-I"/>
</dbReference>
<dbReference type="InterPro" id="IPR036396">
    <property type="entry name" value="Cyt_P450_sf"/>
</dbReference>
<dbReference type="InterPro" id="IPR050196">
    <property type="entry name" value="Cytochrome_P450_Monoox"/>
</dbReference>
<dbReference type="PANTHER" id="PTHR24291:SF47">
    <property type="entry name" value="CYTOCHROME P450 4A14-RELATED"/>
    <property type="match status" value="1"/>
</dbReference>
<dbReference type="PANTHER" id="PTHR24291">
    <property type="entry name" value="CYTOCHROME P450 FAMILY 4"/>
    <property type="match status" value="1"/>
</dbReference>
<dbReference type="Pfam" id="PF00067">
    <property type="entry name" value="p450"/>
    <property type="match status" value="1"/>
</dbReference>
<dbReference type="PRINTS" id="PR00463">
    <property type="entry name" value="EP450I"/>
</dbReference>
<dbReference type="PRINTS" id="PR00385">
    <property type="entry name" value="P450"/>
</dbReference>
<dbReference type="SUPFAM" id="SSF48264">
    <property type="entry name" value="Cytochrome P450"/>
    <property type="match status" value="1"/>
</dbReference>
<dbReference type="PROSITE" id="PS00086">
    <property type="entry name" value="CYTOCHROME_P450"/>
    <property type="match status" value="1"/>
</dbReference>
<feature type="propeptide" id="PRO_0000003567" evidence="5 6">
    <location>
        <begin position="1"/>
        <end position="4"/>
    </location>
</feature>
<feature type="chain" id="PRO_0000003568" description="Cytochrome P450 4A2">
    <location>
        <begin position="5"/>
        <end position="504"/>
    </location>
</feature>
<feature type="binding site" description="covalent" evidence="4">
    <location>
        <position position="315"/>
    </location>
    <ligand>
        <name>heme</name>
        <dbReference type="ChEBI" id="CHEBI:30413"/>
    </ligand>
</feature>
<feature type="binding site" description="axial binding residue" evidence="4">
    <location>
        <position position="451"/>
    </location>
    <ligand>
        <name>heme</name>
        <dbReference type="ChEBI" id="CHEBI:30413"/>
    </ligand>
    <ligandPart>
        <name>Fe</name>
        <dbReference type="ChEBI" id="CHEBI:18248"/>
    </ligandPart>
</feature>
<feature type="modified residue" description="Phosphoserine" evidence="12">
    <location>
        <position position="434"/>
    </location>
</feature>
<feature type="mutagenesis site" description="2-fold decrease of omega/omega-1 hydroxylation ratio for lauric acid." evidence="3">
    <original>S</original>
    <variation>F</variation>
    <location>
        <position position="116"/>
    </location>
</feature>
<proteinExistence type="evidence at protein level"/>
<evidence type="ECO:0000250" key="1">
    <source>
        <dbReference type="UniProtKB" id="P20817"/>
    </source>
</evidence>
<evidence type="ECO:0000269" key="2">
    <source>
    </source>
</evidence>
<evidence type="ECO:0000269" key="3">
    <source>
    </source>
</evidence>
<evidence type="ECO:0000269" key="4">
    <source>
    </source>
</evidence>
<evidence type="ECO:0000269" key="5">
    <source>
    </source>
</evidence>
<evidence type="ECO:0000269" key="6">
    <source>
    </source>
</evidence>
<evidence type="ECO:0000303" key="7">
    <source>
    </source>
</evidence>
<evidence type="ECO:0000305" key="8"/>
<evidence type="ECO:0000305" key="9">
    <source>
    </source>
</evidence>
<evidence type="ECO:0000305" key="10">
    <source>
    </source>
</evidence>
<evidence type="ECO:0000312" key="11">
    <source>
        <dbReference type="RGD" id="2479"/>
    </source>
</evidence>
<evidence type="ECO:0007744" key="12">
    <source>
    </source>
</evidence>
<sequence length="504" mass="57969">MGFSVFSPTRSLDGVSGFFQGAFLLSLFLVLFKAVQFYLRRQWLLKALEKFPSTPSHWLWGHNLKDREFQQVLTWVEKFPGACLQWLSGSTARVLLYDPDYVKVVLGRSDPKPYQSLAPWIGYGLLLLNGKKWFQHRRMLTPAFHYDILKPYVKIMADSVSIMLDKWEKLDDQDHPLEIFHYVSLMTLDTVMKCAFSHQGSVQLDVNSRSYTKAVEDLNNLIFFRVRSAFYGNSIIYNMSSDGRLSRRACQIAHEHTDGVIKTRKAQLQNEEELQKARKKRHLDFLDILLFAKMEDGKSLSDEDLRAEVDTFMFEGHDTTASGISWVFYALATHPEHQERCREEVQSILGDGTSVTWDHLDQMPYTTMCIKEALRLYSPVPSVSRELSSPVTFPDGRSIPKGIRVTILIYGLHHNPSYWPNPKVFDPSRFSPDSPRHSHAYLPFSGGARNCIGKQFAMNELKVAVALTLLRFELLPDPTRIPVPMPRLVLKSKNGIHLRLKKLR</sequence>